<accession>Q9AJG9</accession>
<evidence type="ECO:0000255" key="1">
    <source>
        <dbReference type="HAMAP-Rule" id="MF_01007"/>
    </source>
</evidence>
<sequence>MTESFQHISVLLHESIEGLAIKPDGIYIDGTFGRGGHSRTILSQLGENGRLYSIDRDPQAIAEAKTIDDPRFTIVHGPFSGIAHYAKQHGLAGKVDGVLFDLGVSSPQLDDAERGFSFMKDGPLDMRMDPTSGIPVSQWLMEADLDDITWVIREFGEDKHARRIAKAIVAYRENEENEPLKRTSQLAKLISDAAPKSFKEKKHPATRAFQAFRIYINSELEEIDTALKGAAEILAPQGRLSVISFHSLEDRMVKRFIRKESQGPQVPHGIPMTEAQIQALGSANMKAIGKAIKPSKQEIELNPRSRSSVLRIAEKL</sequence>
<dbReference type="EC" id="2.1.1.199" evidence="1"/>
<dbReference type="EMBL" id="AB047585">
    <property type="protein sequence ID" value="BAB40618.1"/>
    <property type="molecule type" value="Genomic_DNA"/>
</dbReference>
<dbReference type="RefSeq" id="WP_021706961.1">
    <property type="nucleotide sequence ID" value="NZ_BAABTA010000016.1"/>
</dbReference>
<dbReference type="SMR" id="Q9AJG9"/>
<dbReference type="GO" id="GO:0005737">
    <property type="term" value="C:cytoplasm"/>
    <property type="evidence" value="ECO:0007669"/>
    <property type="project" value="UniProtKB-SubCell"/>
</dbReference>
<dbReference type="GO" id="GO:0071424">
    <property type="term" value="F:rRNA (cytosine-N4-)-methyltransferase activity"/>
    <property type="evidence" value="ECO:0007669"/>
    <property type="project" value="UniProtKB-UniRule"/>
</dbReference>
<dbReference type="GO" id="GO:0070475">
    <property type="term" value="P:rRNA base methylation"/>
    <property type="evidence" value="ECO:0007669"/>
    <property type="project" value="UniProtKB-UniRule"/>
</dbReference>
<dbReference type="FunFam" id="1.10.150.170:FF:000001">
    <property type="entry name" value="Ribosomal RNA small subunit methyltransferase H"/>
    <property type="match status" value="1"/>
</dbReference>
<dbReference type="Gene3D" id="1.10.150.170">
    <property type="entry name" value="Putative methyltransferase TM0872, insert domain"/>
    <property type="match status" value="1"/>
</dbReference>
<dbReference type="Gene3D" id="3.40.50.150">
    <property type="entry name" value="Vaccinia Virus protein VP39"/>
    <property type="match status" value="1"/>
</dbReference>
<dbReference type="HAMAP" id="MF_01007">
    <property type="entry name" value="16SrRNA_methyltr_H"/>
    <property type="match status" value="1"/>
</dbReference>
<dbReference type="InterPro" id="IPR002903">
    <property type="entry name" value="RsmH"/>
</dbReference>
<dbReference type="InterPro" id="IPR023397">
    <property type="entry name" value="SAM-dep_MeTrfase_MraW_recog"/>
</dbReference>
<dbReference type="InterPro" id="IPR029063">
    <property type="entry name" value="SAM-dependent_MTases_sf"/>
</dbReference>
<dbReference type="NCBIfam" id="TIGR00006">
    <property type="entry name" value="16S rRNA (cytosine(1402)-N(4))-methyltransferase RsmH"/>
    <property type="match status" value="1"/>
</dbReference>
<dbReference type="PANTHER" id="PTHR11265:SF0">
    <property type="entry name" value="12S RRNA N4-METHYLCYTIDINE METHYLTRANSFERASE"/>
    <property type="match status" value="1"/>
</dbReference>
<dbReference type="PANTHER" id="PTHR11265">
    <property type="entry name" value="S-ADENOSYL-METHYLTRANSFERASE MRAW"/>
    <property type="match status" value="1"/>
</dbReference>
<dbReference type="Pfam" id="PF01795">
    <property type="entry name" value="Methyltransf_5"/>
    <property type="match status" value="1"/>
</dbReference>
<dbReference type="PIRSF" id="PIRSF004486">
    <property type="entry name" value="MraW"/>
    <property type="match status" value="1"/>
</dbReference>
<dbReference type="SUPFAM" id="SSF81799">
    <property type="entry name" value="Putative methyltransferase TM0872, insert domain"/>
    <property type="match status" value="1"/>
</dbReference>
<dbReference type="SUPFAM" id="SSF53335">
    <property type="entry name" value="S-adenosyl-L-methionine-dependent methyltransferases"/>
    <property type="match status" value="1"/>
</dbReference>
<protein>
    <recommendedName>
        <fullName evidence="1">Ribosomal RNA small subunit methyltransferase H</fullName>
        <ecNumber evidence="1">2.1.1.199</ecNumber>
    </recommendedName>
    <alternativeName>
        <fullName evidence="1">16S rRNA m(4)C1402 methyltransferase</fullName>
    </alternativeName>
    <alternativeName>
        <fullName evidence="1">rRNA (cytosine-N(4)-)-methyltransferase RsmH</fullName>
    </alternativeName>
</protein>
<keyword id="KW-0963">Cytoplasm</keyword>
<keyword id="KW-0489">Methyltransferase</keyword>
<keyword id="KW-0698">rRNA processing</keyword>
<keyword id="KW-0949">S-adenosyl-L-methionine</keyword>
<keyword id="KW-0808">Transferase</keyword>
<proteinExistence type="inferred from homology"/>
<comment type="function">
    <text evidence="1">Specifically methylates the N4 position of cytidine in position 1402 (C1402) of 16S rRNA.</text>
</comment>
<comment type="catalytic activity">
    <reaction evidence="1">
        <text>cytidine(1402) in 16S rRNA + S-adenosyl-L-methionine = N(4)-methylcytidine(1402) in 16S rRNA + S-adenosyl-L-homocysteine + H(+)</text>
        <dbReference type="Rhea" id="RHEA:42928"/>
        <dbReference type="Rhea" id="RHEA-COMP:10286"/>
        <dbReference type="Rhea" id="RHEA-COMP:10287"/>
        <dbReference type="ChEBI" id="CHEBI:15378"/>
        <dbReference type="ChEBI" id="CHEBI:57856"/>
        <dbReference type="ChEBI" id="CHEBI:59789"/>
        <dbReference type="ChEBI" id="CHEBI:74506"/>
        <dbReference type="ChEBI" id="CHEBI:82748"/>
        <dbReference type="EC" id="2.1.1.199"/>
    </reaction>
</comment>
<comment type="subcellular location">
    <subcellularLocation>
        <location evidence="1">Cytoplasm</location>
    </subcellularLocation>
</comment>
<comment type="similarity">
    <text evidence="1">Belongs to the methyltransferase superfamily. RsmH family.</text>
</comment>
<organism>
    <name type="scientific">Vibrio proteolyticus</name>
    <name type="common">Aeromonas proteolytica</name>
    <dbReference type="NCBI Taxonomy" id="671"/>
    <lineage>
        <taxon>Bacteria</taxon>
        <taxon>Pseudomonadati</taxon>
        <taxon>Pseudomonadota</taxon>
        <taxon>Gammaproteobacteria</taxon>
        <taxon>Vibrionales</taxon>
        <taxon>Vibrionaceae</taxon>
        <taxon>Vibrio</taxon>
    </lineage>
</organism>
<feature type="chain" id="PRO_0000108744" description="Ribosomal RNA small subunit methyltransferase H">
    <location>
        <begin position="1"/>
        <end position="316"/>
    </location>
</feature>
<feature type="binding site" evidence="1">
    <location>
        <begin position="35"/>
        <end position="37"/>
    </location>
    <ligand>
        <name>S-adenosyl-L-methionine</name>
        <dbReference type="ChEBI" id="CHEBI:59789"/>
    </ligand>
</feature>
<feature type="binding site" evidence="1">
    <location>
        <position position="55"/>
    </location>
    <ligand>
        <name>S-adenosyl-L-methionine</name>
        <dbReference type="ChEBI" id="CHEBI:59789"/>
    </ligand>
</feature>
<feature type="binding site" evidence="1">
    <location>
        <position position="79"/>
    </location>
    <ligand>
        <name>S-adenosyl-L-methionine</name>
        <dbReference type="ChEBI" id="CHEBI:59789"/>
    </ligand>
</feature>
<feature type="binding site" evidence="1">
    <location>
        <position position="101"/>
    </location>
    <ligand>
        <name>S-adenosyl-L-methionine</name>
        <dbReference type="ChEBI" id="CHEBI:59789"/>
    </ligand>
</feature>
<feature type="binding site" evidence="1">
    <location>
        <position position="108"/>
    </location>
    <ligand>
        <name>S-adenosyl-L-methionine</name>
        <dbReference type="ChEBI" id="CHEBI:59789"/>
    </ligand>
</feature>
<reference key="1">
    <citation type="journal article" date="2001" name="FEMS Microbiol. Lett.">
        <title>Structures of ribonuclease P RNAs of Vibrio core species.</title>
        <authorList>
            <person name="Maeda T."/>
            <person name="Furushita M."/>
            <person name="Hamamura K."/>
            <person name="Shiba T."/>
        </authorList>
    </citation>
    <scope>NUCLEOTIDE SEQUENCE [GENOMIC DNA]</scope>
    <source>
        <strain>ATCC 15338 / DSM 30189 / CCUG 20302 / JCM 21193 / LMG 3772 / NBRC 13287 / NCIMB 1326</strain>
    </source>
</reference>
<name>RSMH_VIBPR</name>
<gene>
    <name evidence="1" type="primary">rsmH</name>
    <name type="synonym">mraW</name>
</gene>